<sequence>MESGAYGVAEAGGSFDLRPFLTQPQVVARALCLVFALIVFSCIYGEGYSNTHKSKQMYCVFNHNEDACRYGSAIGVLAFLASAFLVVDAYFPQISNATDRKYLVIGDLLFSALWTFLWFVGFCFLTNQWAVTDPEDVLVGADSARAAITFSFFSIFSWGVLASLTYQRYKAGVDDFIQNYVDPSPDPNTAYASYPGASVDNYQQPPFTQNAETTEGYQPPPVY</sequence>
<organism>
    <name type="scientific">Homo sapiens</name>
    <name type="common">Human</name>
    <dbReference type="NCBI Taxonomy" id="9606"/>
    <lineage>
        <taxon>Eukaryota</taxon>
        <taxon>Metazoa</taxon>
        <taxon>Chordata</taxon>
        <taxon>Craniata</taxon>
        <taxon>Vertebrata</taxon>
        <taxon>Euteleostomi</taxon>
        <taxon>Mammalia</taxon>
        <taxon>Eutheria</taxon>
        <taxon>Euarchontoglires</taxon>
        <taxon>Primates</taxon>
        <taxon>Haplorrhini</taxon>
        <taxon>Catarrhini</taxon>
        <taxon>Hominidae</taxon>
        <taxon>Homo</taxon>
    </lineage>
</organism>
<feature type="chain" id="PRO_0000343945" description="Putative synaptogyrin-2 like protein">
    <location>
        <begin position="1"/>
        <end position="223"/>
    </location>
</feature>
<feature type="transmembrane region" description="Helical" evidence="2">
    <location>
        <begin position="26"/>
        <end position="46"/>
    </location>
</feature>
<feature type="transmembrane region" description="Helical" evidence="2">
    <location>
        <begin position="71"/>
        <end position="91"/>
    </location>
</feature>
<feature type="transmembrane region" description="Helical" evidence="2">
    <location>
        <begin position="104"/>
        <end position="124"/>
    </location>
</feature>
<feature type="transmembrane region" description="Helical" evidence="2">
    <location>
        <begin position="146"/>
        <end position="166"/>
    </location>
</feature>
<feature type="domain" description="MARVEL" evidence="3">
    <location>
        <begin position="20"/>
        <end position="170"/>
    </location>
</feature>
<feature type="region of interest" description="Disordered" evidence="4">
    <location>
        <begin position="197"/>
        <end position="223"/>
    </location>
</feature>
<feature type="compositionally biased region" description="Polar residues" evidence="4">
    <location>
        <begin position="200"/>
        <end position="216"/>
    </location>
</feature>
<feature type="modified residue" description="N-acetylmethionine" evidence="1">
    <location>
        <position position="1"/>
    </location>
</feature>
<feature type="modified residue" description="Phosphoserine" evidence="1">
    <location>
        <position position="3"/>
    </location>
</feature>
<dbReference type="EMBL" id="AC111152">
    <property type="status" value="NOT_ANNOTATED_CDS"/>
    <property type="molecule type" value="Genomic_DNA"/>
</dbReference>
<dbReference type="SMR" id="A8MWL6"/>
<dbReference type="FunCoup" id="A8MWL6">
    <property type="interactions" value="101"/>
</dbReference>
<dbReference type="iPTMnet" id="A8MWL6"/>
<dbReference type="PhosphoSitePlus" id="A8MWL6"/>
<dbReference type="BioMuta" id="-"/>
<dbReference type="jPOST" id="A8MWL6"/>
<dbReference type="MassIVE" id="A8MWL6"/>
<dbReference type="PeptideAtlas" id="A8MWL6"/>
<dbReference type="AGR" id="HGNC:11499"/>
<dbReference type="neXtProt" id="NX_A8MWL6"/>
<dbReference type="InParanoid" id="A8MWL6"/>
<dbReference type="PAN-GO" id="A8MWL6">
    <property type="GO annotations" value="2 GO annotations based on evolutionary models"/>
</dbReference>
<dbReference type="PhylomeDB" id="A8MWL6"/>
<dbReference type="Pharos" id="A8MWL6">
    <property type="development level" value="Tdark"/>
</dbReference>
<dbReference type="Proteomes" id="UP000005640">
    <property type="component" value="Unplaced"/>
</dbReference>
<dbReference type="RNAct" id="A8MWL6">
    <property type="molecule type" value="protein"/>
</dbReference>
<dbReference type="GO" id="GO:0031594">
    <property type="term" value="C:neuromuscular junction"/>
    <property type="evidence" value="ECO:0000318"/>
    <property type="project" value="GO_Central"/>
</dbReference>
<dbReference type="GO" id="GO:0030672">
    <property type="term" value="C:synaptic vesicle membrane"/>
    <property type="evidence" value="ECO:0000318"/>
    <property type="project" value="GO_Central"/>
</dbReference>
<dbReference type="InterPro" id="IPR008253">
    <property type="entry name" value="Marvel"/>
</dbReference>
<dbReference type="InterPro" id="IPR016579">
    <property type="entry name" value="Synaptogyrin"/>
</dbReference>
<dbReference type="PANTHER" id="PTHR10838">
    <property type="entry name" value="SYNAPTOGYRIN"/>
    <property type="match status" value="1"/>
</dbReference>
<dbReference type="PANTHER" id="PTHR10838:SF19">
    <property type="entry name" value="SYNAPTOGYRIN-2 LIKE PROTEIN-RELATED"/>
    <property type="match status" value="1"/>
</dbReference>
<dbReference type="Pfam" id="PF01284">
    <property type="entry name" value="MARVEL"/>
    <property type="match status" value="1"/>
</dbReference>
<dbReference type="PIRSF" id="PIRSF011282">
    <property type="entry name" value="Synaptogyrin"/>
    <property type="match status" value="1"/>
</dbReference>
<dbReference type="PROSITE" id="PS51225">
    <property type="entry name" value="MARVEL"/>
    <property type="match status" value="1"/>
</dbReference>
<name>SNG2L_HUMAN</name>
<evidence type="ECO:0000250" key="1">
    <source>
        <dbReference type="UniProtKB" id="O43760"/>
    </source>
</evidence>
<evidence type="ECO:0000255" key="2"/>
<evidence type="ECO:0000255" key="3">
    <source>
        <dbReference type="PROSITE-ProRule" id="PRU00581"/>
    </source>
</evidence>
<evidence type="ECO:0000256" key="4">
    <source>
        <dbReference type="SAM" id="MobiDB-lite"/>
    </source>
</evidence>
<evidence type="ECO:0000305" key="5"/>
<reference key="1">
    <citation type="journal article" date="2006" name="Nature">
        <title>Analysis of the DNA sequence and duplication history of human chromosome 15.</title>
        <authorList>
            <person name="Zody M.C."/>
            <person name="Garber M."/>
            <person name="Sharpe T."/>
            <person name="Young S.K."/>
            <person name="Rowen L."/>
            <person name="O'Neill K."/>
            <person name="Whittaker C.A."/>
            <person name="Kamal M."/>
            <person name="Chang J.L."/>
            <person name="Cuomo C.A."/>
            <person name="Dewar K."/>
            <person name="FitzGerald M.G."/>
            <person name="Kodira C.D."/>
            <person name="Madan A."/>
            <person name="Qin S."/>
            <person name="Yang X."/>
            <person name="Abbasi N."/>
            <person name="Abouelleil A."/>
            <person name="Arachchi H.M."/>
            <person name="Baradarani L."/>
            <person name="Birditt B."/>
            <person name="Bloom S."/>
            <person name="Bloom T."/>
            <person name="Borowsky M.L."/>
            <person name="Burke J."/>
            <person name="Butler J."/>
            <person name="Cook A."/>
            <person name="DeArellano K."/>
            <person name="DeCaprio D."/>
            <person name="Dorris L. III"/>
            <person name="Dors M."/>
            <person name="Eichler E.E."/>
            <person name="Engels R."/>
            <person name="Fahey J."/>
            <person name="Fleetwood P."/>
            <person name="Friedman C."/>
            <person name="Gearin G."/>
            <person name="Hall J.L."/>
            <person name="Hensley G."/>
            <person name="Johnson E."/>
            <person name="Jones C."/>
            <person name="Kamat A."/>
            <person name="Kaur A."/>
            <person name="Locke D.P."/>
            <person name="Madan A."/>
            <person name="Munson G."/>
            <person name="Jaffe D.B."/>
            <person name="Lui A."/>
            <person name="Macdonald P."/>
            <person name="Mauceli E."/>
            <person name="Naylor J.W."/>
            <person name="Nesbitt R."/>
            <person name="Nicol R."/>
            <person name="O'Leary S.B."/>
            <person name="Ratcliffe A."/>
            <person name="Rounsley S."/>
            <person name="She X."/>
            <person name="Sneddon K.M.B."/>
            <person name="Stewart S."/>
            <person name="Sougnez C."/>
            <person name="Stone S.M."/>
            <person name="Topham K."/>
            <person name="Vincent D."/>
            <person name="Wang S."/>
            <person name="Zimmer A.R."/>
            <person name="Birren B.W."/>
            <person name="Hood L."/>
            <person name="Lander E.S."/>
            <person name="Nusbaum C."/>
        </authorList>
    </citation>
    <scope>NUCLEOTIDE SEQUENCE [LARGE SCALE GENOMIC DNA]</scope>
</reference>
<reference key="2">
    <citation type="journal article" date="1998" name="Hum. Genet.">
        <title>Characterization of the human synaptogyrin gene family.</title>
        <authorList>
            <person name="Kedra D."/>
            <person name="Pan H.-Q."/>
            <person name="Seroussi E."/>
            <person name="Fransson I."/>
            <person name="Guilbaud C."/>
            <person name="Collins J.E."/>
            <person name="Dunham I."/>
            <person name="Blennow E."/>
            <person name="Roe B.A."/>
            <person name="Piehl F."/>
            <person name="Dumanski J.P."/>
        </authorList>
    </citation>
    <scope>IDENTIFICATION</scope>
</reference>
<proteinExistence type="uncertain"/>
<accession>A8MWL6</accession>
<comment type="subcellular location">
    <subcellularLocation>
        <location>Membrane</location>
        <topology>Multi-pass membrane protein</topology>
    </subcellularLocation>
</comment>
<comment type="similarity">
    <text evidence="5">Belongs to the synaptogyrin family.</text>
</comment>
<comment type="caution">
    <text evidence="5">Could be the product of a pseudogene. According to PubMed:9760194, it is a processed pseudogene.</text>
</comment>
<keyword id="KW-0007">Acetylation</keyword>
<keyword id="KW-0472">Membrane</keyword>
<keyword id="KW-0597">Phosphoprotein</keyword>
<keyword id="KW-1267">Proteomics identification</keyword>
<keyword id="KW-1185">Reference proteome</keyword>
<keyword id="KW-0812">Transmembrane</keyword>
<keyword id="KW-1133">Transmembrane helix</keyword>
<protein>
    <recommendedName>
        <fullName>Putative synaptogyrin-2 like protein</fullName>
    </recommendedName>
</protein>